<accession>Q5UR47</accession>
<protein>
    <recommendedName>
        <fullName>Uncharacterized protein R570</fullName>
    </recommendedName>
</protein>
<evidence type="ECO:0000255" key="1"/>
<organismHost>
    <name type="scientific">Acanthamoeba polyphaga</name>
    <name type="common">Amoeba</name>
    <dbReference type="NCBI Taxonomy" id="5757"/>
</organismHost>
<keyword id="KW-0175">Coiled coil</keyword>
<keyword id="KW-1185">Reference proteome</keyword>
<name>YR570_MIMIV</name>
<reference key="1">
    <citation type="journal article" date="2004" name="Science">
        <title>The 1.2-megabase genome sequence of Mimivirus.</title>
        <authorList>
            <person name="Raoult D."/>
            <person name="Audic S."/>
            <person name="Robert C."/>
            <person name="Abergel C."/>
            <person name="Renesto P."/>
            <person name="Ogata H."/>
            <person name="La Scola B."/>
            <person name="Susan M."/>
            <person name="Claverie J.-M."/>
        </authorList>
    </citation>
    <scope>NUCLEOTIDE SEQUENCE [LARGE SCALE GENOMIC DNA]</scope>
    <source>
        <strain>Rowbotham-Bradford</strain>
    </source>
</reference>
<dbReference type="EMBL" id="AY653733">
    <property type="protein sequence ID" value="AAV50833.1"/>
    <property type="molecule type" value="Genomic_DNA"/>
</dbReference>
<dbReference type="SMR" id="Q5UR47"/>
<dbReference type="KEGG" id="vg:9925206"/>
<dbReference type="Proteomes" id="UP000001134">
    <property type="component" value="Genome"/>
</dbReference>
<proteinExistence type="predicted"/>
<sequence>MNDQNSNQFIIYDSNNGFVITPKLTDNIISKLIDFIDQSRNSYREYYGVNCFLWKLDLVNNAIISDSAVEFIIDNDIFSQLSHIASYLFNHYYRLKGTFYCRTENIIEYIYMDGLTNLLTHYVLIDTIDSMCNDDSNDNEKLLSESKEKLNVFIKSTKGFTSDSESVEDIEKNNQSNITCKKIYYVNKIYNNPIINIGDSGKYSELKTKVNDIENDLRTLSSNTNLLWKISALMSMIIVGTVCYLRK</sequence>
<feature type="chain" id="PRO_0000253922" description="Uncharacterized protein R570">
    <location>
        <begin position="1"/>
        <end position="247"/>
    </location>
</feature>
<feature type="coiled-coil region" evidence="1">
    <location>
        <begin position="200"/>
        <end position="225"/>
    </location>
</feature>
<gene>
    <name type="ordered locus">MIMI_R570</name>
</gene>
<organism>
    <name type="scientific">Acanthamoeba polyphaga mimivirus</name>
    <name type="common">APMV</name>
    <dbReference type="NCBI Taxonomy" id="212035"/>
    <lineage>
        <taxon>Viruses</taxon>
        <taxon>Varidnaviria</taxon>
        <taxon>Bamfordvirae</taxon>
        <taxon>Nucleocytoviricota</taxon>
        <taxon>Megaviricetes</taxon>
        <taxon>Imitervirales</taxon>
        <taxon>Mimiviridae</taxon>
        <taxon>Megamimivirinae</taxon>
        <taxon>Mimivirus</taxon>
        <taxon>Mimivirus bradfordmassiliense</taxon>
    </lineage>
</organism>